<organismHost>
    <name type="scientific">Bacillus subtilis</name>
    <dbReference type="NCBI Taxonomy" id="1423"/>
</organismHost>
<gene>
    <name type="primary">47</name>
</gene>
<sequence>MDWTKMTFMGTVDEVKEIWNGLEEAGRLYAVWLSDDHVYGIVDVNEEGLFCLGWVSDISPESLQNMLGGGAELFESYEDVLSEHGGSIAIRVEV</sequence>
<reference key="1">
    <citation type="journal article" date="1998" name="Virology">
        <title>Genes and regulatory sites of the 'host-takeover module' in the terminal redundancy of Bacillus subtilis bacteriophage SPO1.</title>
        <authorList>
            <person name="Stewart C.R."/>
            <person name="Gaslightwala I."/>
            <person name="Hinata K."/>
            <person name="Krolikowski K.A."/>
            <person name="Needleman D.S."/>
            <person name="Peng A.S.-Y."/>
            <person name="Peterman M.A."/>
            <person name="Tobias A."/>
            <person name="Wei P."/>
        </authorList>
    </citation>
    <scope>NUCLEOTIDE SEQUENCE [GENOMIC DNA]</scope>
</reference>
<proteinExistence type="predicted"/>
<name>GP47_BPSP1</name>
<protein>
    <recommendedName>
        <fullName>Putative gene 47 protein</fullName>
    </recommendedName>
</protein>
<organism>
    <name type="scientific">Bacillus phage SP01</name>
    <name type="common">Bacteriophage SP01</name>
    <dbReference type="NCBI Taxonomy" id="2884427"/>
    <lineage>
        <taxon>Viruses</taxon>
        <taxon>Duplodnaviria</taxon>
        <taxon>Heunggongvirae</taxon>
        <taxon>Uroviricota</taxon>
        <taxon>Caudoviricetes</taxon>
        <taxon>Herelleviridae</taxon>
        <taxon>Spounavirinae</taxon>
        <taxon>Okubovirus</taxon>
        <taxon>Okubovirus SPO1</taxon>
    </lineage>
</organism>
<feature type="chain" id="PRO_0000106153" description="Putative gene 47 protein">
    <location>
        <begin position="1"/>
        <end position="94"/>
    </location>
</feature>
<accession>O48401</accession>
<dbReference type="EMBL" id="AF031901">
    <property type="protein sequence ID" value="AAC29016.1"/>
    <property type="molecule type" value="Genomic_DNA"/>
</dbReference>
<dbReference type="RefSeq" id="YP_002300291.1">
    <property type="nucleotide sequence ID" value="NC_011421.1"/>
</dbReference>
<dbReference type="GeneID" id="7009004"/>
<dbReference type="KEGG" id="vg:7009004"/>